<reference key="1">
    <citation type="journal article" date="1996" name="Science">
        <title>Complete genome sequence of the methanogenic archaeon, Methanococcus jannaschii.</title>
        <authorList>
            <person name="Bult C.J."/>
            <person name="White O."/>
            <person name="Olsen G.J."/>
            <person name="Zhou L."/>
            <person name="Fleischmann R.D."/>
            <person name="Sutton G.G."/>
            <person name="Blake J.A."/>
            <person name="FitzGerald L.M."/>
            <person name="Clayton R.A."/>
            <person name="Gocayne J.D."/>
            <person name="Kerlavage A.R."/>
            <person name="Dougherty B.A."/>
            <person name="Tomb J.-F."/>
            <person name="Adams M.D."/>
            <person name="Reich C.I."/>
            <person name="Overbeek R."/>
            <person name="Kirkness E.F."/>
            <person name="Weinstock K.G."/>
            <person name="Merrick J.M."/>
            <person name="Glodek A."/>
            <person name="Scott J.L."/>
            <person name="Geoghagen N.S.M."/>
            <person name="Weidman J.F."/>
            <person name="Fuhrmann J.L."/>
            <person name="Nguyen D."/>
            <person name="Utterback T.R."/>
            <person name="Kelley J.M."/>
            <person name="Peterson J.D."/>
            <person name="Sadow P.W."/>
            <person name="Hanna M.C."/>
            <person name="Cotton M.D."/>
            <person name="Roberts K.M."/>
            <person name="Hurst M.A."/>
            <person name="Kaine B.P."/>
            <person name="Borodovsky M."/>
            <person name="Klenk H.-P."/>
            <person name="Fraser C.M."/>
            <person name="Smith H.O."/>
            <person name="Woese C.R."/>
            <person name="Venter J.C."/>
        </authorList>
    </citation>
    <scope>NUCLEOTIDE SEQUENCE [LARGE SCALE GENOMIC DNA]</scope>
    <source>
        <strain>ATCC 43067 / DSM 2661 / JAL-1 / JCM 10045 / NBRC 100440</strain>
    </source>
</reference>
<evidence type="ECO:0000305" key="1"/>
<proteinExistence type="inferred from homology"/>
<dbReference type="EMBL" id="L77117">
    <property type="protein sequence ID" value="AAB99550.1"/>
    <property type="molecule type" value="Genomic_DNA"/>
</dbReference>
<dbReference type="PIR" id="C64490">
    <property type="entry name" value="C64490"/>
</dbReference>
<dbReference type="RefSeq" id="WP_010871048.1">
    <property type="nucleotide sequence ID" value="NC_000909.1"/>
</dbReference>
<dbReference type="SMR" id="Q58919"/>
<dbReference type="STRING" id="243232.MJ_1524"/>
<dbReference type="PaxDb" id="243232-MJ_1524"/>
<dbReference type="EnsemblBacteria" id="AAB99550">
    <property type="protein sequence ID" value="AAB99550"/>
    <property type="gene ID" value="MJ_1524"/>
</dbReference>
<dbReference type="GeneID" id="1452432"/>
<dbReference type="KEGG" id="mja:MJ_1524"/>
<dbReference type="eggNOG" id="arCOG04967">
    <property type="taxonomic scope" value="Archaea"/>
</dbReference>
<dbReference type="HOGENOM" id="CLU_146749_2_0_2"/>
<dbReference type="InParanoid" id="Q58919"/>
<dbReference type="OrthoDB" id="8505at2157"/>
<dbReference type="PhylomeDB" id="Q58919"/>
<dbReference type="Proteomes" id="UP000000805">
    <property type="component" value="Chromosome"/>
</dbReference>
<dbReference type="Gene3D" id="3.30.70.120">
    <property type="match status" value="1"/>
</dbReference>
<dbReference type="InterPro" id="IPR011322">
    <property type="entry name" value="N-reg_PII-like_a/b"/>
</dbReference>
<dbReference type="InterPro" id="IPR015867">
    <property type="entry name" value="N-reg_PII/ATP_PRibTrfase_C"/>
</dbReference>
<dbReference type="InterPro" id="IPR003793">
    <property type="entry name" value="UPF0166"/>
</dbReference>
<dbReference type="PANTHER" id="PTHR35983">
    <property type="entry name" value="UPF0166 PROTEIN TM_0021"/>
    <property type="match status" value="1"/>
</dbReference>
<dbReference type="PANTHER" id="PTHR35983:SF1">
    <property type="entry name" value="UPF0166 PROTEIN TM_0021"/>
    <property type="match status" value="1"/>
</dbReference>
<dbReference type="Pfam" id="PF02641">
    <property type="entry name" value="DUF190"/>
    <property type="match status" value="1"/>
</dbReference>
<dbReference type="SUPFAM" id="SSF54913">
    <property type="entry name" value="GlnB-like"/>
    <property type="match status" value="1"/>
</dbReference>
<feature type="chain" id="PRO_0000185233" description="UPF0166 protein MJ1524">
    <location>
        <begin position="1"/>
        <end position="108"/>
    </location>
</feature>
<keyword id="KW-1185">Reference proteome</keyword>
<organism>
    <name type="scientific">Methanocaldococcus jannaschii (strain ATCC 43067 / DSM 2661 / JAL-1 / JCM 10045 / NBRC 100440)</name>
    <name type="common">Methanococcus jannaschii</name>
    <dbReference type="NCBI Taxonomy" id="243232"/>
    <lineage>
        <taxon>Archaea</taxon>
        <taxon>Methanobacteriati</taxon>
        <taxon>Methanobacteriota</taxon>
        <taxon>Methanomada group</taxon>
        <taxon>Methanococci</taxon>
        <taxon>Methanococcales</taxon>
        <taxon>Methanocaldococcaceae</taxon>
        <taxon>Methanocaldococcus</taxon>
    </lineage>
</organism>
<protein>
    <recommendedName>
        <fullName>UPF0166 protein MJ1524</fullName>
    </recommendedName>
</protein>
<name>Y1524_METJA</name>
<accession>Q58919</accession>
<comment type="similarity">
    <text evidence="1">Belongs to the UPF0166 family.</text>
</comment>
<sequence>MIKAKILKIYLREGDKFEGELMYKHIMKILKREGISGATVYKGICGYGVRGVAEFDIFRLSVNLPVIIECVDIEENINRVLPKLYEVIKNNGLIIITDCHVYKGETYE</sequence>
<gene>
    <name type="ordered locus">MJ1524</name>
</gene>